<evidence type="ECO:0000255" key="1">
    <source>
        <dbReference type="PROSITE-ProRule" id="PRU01246"/>
    </source>
</evidence>
<evidence type="ECO:0000305" key="2"/>
<feature type="chain" id="PRO_0000197539" description="Type 1 fimbriae regulatory protein FimB">
    <location>
        <begin position="1"/>
        <end position="200"/>
    </location>
</feature>
<feature type="domain" description="Tyr recombinase" evidence="1">
    <location>
        <begin position="8"/>
        <end position="189"/>
    </location>
</feature>
<feature type="active site" evidence="1">
    <location>
        <position position="47"/>
    </location>
</feature>
<feature type="active site" evidence="1">
    <location>
        <position position="72"/>
    </location>
</feature>
<feature type="active site" evidence="1">
    <location>
        <position position="141"/>
    </location>
</feature>
<feature type="active site" evidence="1">
    <location>
        <position position="144"/>
    </location>
</feature>
<feature type="active site" evidence="1">
    <location>
        <position position="167"/>
    </location>
</feature>
<feature type="active site" description="O-(3'-phospho-DNA)-tyrosine intermediate" evidence="1">
    <location>
        <position position="176"/>
    </location>
</feature>
<feature type="sequence conflict" description="In Ref. 5; AAA23779." evidence="2" ref="5">
    <original>L</original>
    <variation>V</variation>
    <location>
        <position position="13"/>
    </location>
</feature>
<feature type="sequence conflict" description="In Ref. 5; AAA23779." evidence="2" ref="5">
    <original>A</original>
    <variation>G</variation>
    <location>
        <position position="32"/>
    </location>
</feature>
<feature type="sequence conflict" description="In Ref. 1; CAA27560." evidence="2" ref="1">
    <original>E</original>
    <variation>D</variation>
    <location>
        <position position="85"/>
    </location>
</feature>
<keyword id="KW-0229">DNA integration</keyword>
<keyword id="KW-0233">DNA recombination</keyword>
<keyword id="KW-1029">Fimbrium biogenesis</keyword>
<keyword id="KW-1185">Reference proteome</keyword>
<keyword id="KW-0804">Transcription</keyword>
<keyword id="KW-0805">Transcription regulation</keyword>
<reference key="1">
    <citation type="journal article" date="1986" name="EMBO J.">
        <title>Two regulatory fim genes, fimB and fimE, control the phase variation of type 1 fimbriae in Escherichia coli.</title>
        <authorList>
            <person name="Klemm P."/>
        </authorList>
    </citation>
    <scope>NUCLEOTIDE SEQUENCE [GENOMIC DNA]</scope>
</reference>
<reference key="2">
    <citation type="journal article" date="1995" name="Nucleic Acids Res.">
        <title>Analysis of the Escherichia coli genome VI: DNA sequence of the region from 92.8 through 100 minutes.</title>
        <authorList>
            <person name="Burland V.D."/>
            <person name="Plunkett G. III"/>
            <person name="Sofia H.J."/>
            <person name="Daniels D.L."/>
            <person name="Blattner F.R."/>
        </authorList>
    </citation>
    <scope>NUCLEOTIDE SEQUENCE [LARGE SCALE GENOMIC DNA]</scope>
    <source>
        <strain>K12 / MG1655 / ATCC 47076</strain>
    </source>
</reference>
<reference key="3">
    <citation type="journal article" date="1997" name="Science">
        <title>The complete genome sequence of Escherichia coli K-12.</title>
        <authorList>
            <person name="Blattner F.R."/>
            <person name="Plunkett G. III"/>
            <person name="Bloch C.A."/>
            <person name="Perna N.T."/>
            <person name="Burland V."/>
            <person name="Riley M."/>
            <person name="Collado-Vides J."/>
            <person name="Glasner J.D."/>
            <person name="Rode C.K."/>
            <person name="Mayhew G.F."/>
            <person name="Gregor J."/>
            <person name="Davis N.W."/>
            <person name="Kirkpatrick H.A."/>
            <person name="Goeden M.A."/>
            <person name="Rose D.J."/>
            <person name="Mau B."/>
            <person name="Shao Y."/>
        </authorList>
    </citation>
    <scope>NUCLEOTIDE SEQUENCE [LARGE SCALE GENOMIC DNA]</scope>
    <source>
        <strain>K12 / MG1655 / ATCC 47076</strain>
    </source>
</reference>
<reference key="4">
    <citation type="journal article" date="2006" name="Mol. Syst. Biol.">
        <title>Highly accurate genome sequences of Escherichia coli K-12 strains MG1655 and W3110.</title>
        <authorList>
            <person name="Hayashi K."/>
            <person name="Morooka N."/>
            <person name="Yamamoto Y."/>
            <person name="Fujita K."/>
            <person name="Isono K."/>
            <person name="Choi S."/>
            <person name="Ohtsubo E."/>
            <person name="Baba T."/>
            <person name="Wanner B.L."/>
            <person name="Mori H."/>
            <person name="Horiuchi T."/>
        </authorList>
    </citation>
    <scope>NUCLEOTIDE SEQUENCE [LARGE SCALE GENOMIC DNA]</scope>
    <source>
        <strain>K12 / W3110 / ATCC 27325 / DSM 5911</strain>
    </source>
</reference>
<reference key="5">
    <citation type="journal article" date="1994" name="Mol. Gen. Genet.">
        <title>Analysis of the fimB promoter region involved in type 1 pilus phase variation in Escherichia coli.</title>
        <authorList>
            <person name="Schwan W.R."/>
            <person name="Seifert H.S."/>
            <person name="Duncan J.L."/>
        </authorList>
    </citation>
    <scope>NUCLEOTIDE SEQUENCE [GENOMIC DNA] OF 1-70</scope>
    <source>
        <strain>ATCC 700336 / J96</strain>
    </source>
</reference>
<name>FIMB_ECOLI</name>
<proteinExistence type="inferred from homology"/>
<sequence>MKNKADNKKRNFLTHSEIESLLKAANTGPHAARNYCLTLLCFIHGFRASEICRLRISDIDLKAKCIYIHRLKKGFSTTHPLLNKEVQALKNWLSIRTSYPHAESEWVFLSRKGNPLSRQQFYHIISTSGGNAGLSLEIHPHMLRHSCGFALANMGIDTRLIQDYLGHRNIRHTVWYTASNAGRFYGIWDRARGRQRHAVL</sequence>
<comment type="function">
    <text>FimB is one of the 2 regulatory proteins which control the phase variation of type 1 fimbriae in E.coli. These proteins mediate the periodic inversion of a 300bp DNA segment that harbors the promoter for the fimbrial structural gene, FimA. FimB switches FimA on.</text>
</comment>
<comment type="similarity">
    <text evidence="2">Belongs to the 'phage' integrase family.</text>
</comment>
<gene>
    <name type="primary">fimB</name>
    <name type="ordered locus">b4312</name>
    <name type="ordered locus">JW4275</name>
</gene>
<organism>
    <name type="scientific">Escherichia coli (strain K12)</name>
    <dbReference type="NCBI Taxonomy" id="83333"/>
    <lineage>
        <taxon>Bacteria</taxon>
        <taxon>Pseudomonadati</taxon>
        <taxon>Pseudomonadota</taxon>
        <taxon>Gammaproteobacteria</taxon>
        <taxon>Enterobacterales</taxon>
        <taxon>Enterobacteriaceae</taxon>
        <taxon>Escherichia</taxon>
    </lineage>
</organism>
<protein>
    <recommendedName>
        <fullName>Type 1 fimbriae regulatory protein FimB</fullName>
    </recommendedName>
</protein>
<dbReference type="EMBL" id="X03923">
    <property type="protein sequence ID" value="CAA27560.1"/>
    <property type="molecule type" value="Genomic_DNA"/>
</dbReference>
<dbReference type="EMBL" id="U14003">
    <property type="protein sequence ID" value="AAA97208.1"/>
    <property type="molecule type" value="Genomic_DNA"/>
</dbReference>
<dbReference type="EMBL" id="U00096">
    <property type="protein sequence ID" value="AAC77268.1"/>
    <property type="molecule type" value="Genomic_DNA"/>
</dbReference>
<dbReference type="EMBL" id="AP009048">
    <property type="protein sequence ID" value="BAE78305.1"/>
    <property type="molecule type" value="Genomic_DNA"/>
</dbReference>
<dbReference type="EMBL" id="L07756">
    <property type="protein sequence ID" value="AAA23779.1"/>
    <property type="molecule type" value="Genomic_DNA"/>
</dbReference>
<dbReference type="PIR" id="S56537">
    <property type="entry name" value="RGECFF"/>
</dbReference>
<dbReference type="RefSeq" id="NP_418732.1">
    <property type="nucleotide sequence ID" value="NC_000913.3"/>
</dbReference>
<dbReference type="RefSeq" id="WP_000790583.1">
    <property type="nucleotide sequence ID" value="NZ_STEB01000025.1"/>
</dbReference>
<dbReference type="SMR" id="P0ADH5"/>
<dbReference type="BioGRID" id="4259374">
    <property type="interactions" value="165"/>
</dbReference>
<dbReference type="DIP" id="DIP-47842N"/>
<dbReference type="FunCoup" id="P0ADH5">
    <property type="interactions" value="90"/>
</dbReference>
<dbReference type="IntAct" id="P0ADH5">
    <property type="interactions" value="23"/>
</dbReference>
<dbReference type="STRING" id="511145.b4312"/>
<dbReference type="PaxDb" id="511145-b4312"/>
<dbReference type="EnsemblBacteria" id="AAC77268">
    <property type="protein sequence ID" value="AAC77268"/>
    <property type="gene ID" value="b4312"/>
</dbReference>
<dbReference type="GeneID" id="75206128"/>
<dbReference type="GeneID" id="948832"/>
<dbReference type="KEGG" id="ecj:JW4275"/>
<dbReference type="KEGG" id="eco:b4312"/>
<dbReference type="KEGG" id="ecoc:C3026_23290"/>
<dbReference type="PATRIC" id="fig|1411691.4.peg.2380"/>
<dbReference type="EchoBASE" id="EB0305"/>
<dbReference type="eggNOG" id="COG0582">
    <property type="taxonomic scope" value="Bacteria"/>
</dbReference>
<dbReference type="HOGENOM" id="CLU_027562_39_0_6"/>
<dbReference type="InParanoid" id="P0ADH5"/>
<dbReference type="OMA" id="ARCVYIH"/>
<dbReference type="OrthoDB" id="5589990at2"/>
<dbReference type="PhylomeDB" id="P0ADH5"/>
<dbReference type="BioCyc" id="EcoCyc:EG10309-MONOMER"/>
<dbReference type="PRO" id="PR:P0ADH5"/>
<dbReference type="Proteomes" id="UP000000625">
    <property type="component" value="Chromosome"/>
</dbReference>
<dbReference type="GO" id="GO:0048476">
    <property type="term" value="C:Holliday junction resolvase complex"/>
    <property type="evidence" value="ECO:0000318"/>
    <property type="project" value="GO_Central"/>
</dbReference>
<dbReference type="GO" id="GO:0003677">
    <property type="term" value="F:DNA binding"/>
    <property type="evidence" value="ECO:0000318"/>
    <property type="project" value="GO_Central"/>
</dbReference>
<dbReference type="GO" id="GO:0043565">
    <property type="term" value="F:sequence-specific DNA binding"/>
    <property type="evidence" value="ECO:0000314"/>
    <property type="project" value="EcoCyc"/>
</dbReference>
<dbReference type="GO" id="GO:0009037">
    <property type="term" value="F:tyrosine-based site-specific recombinase activity"/>
    <property type="evidence" value="ECO:0000318"/>
    <property type="project" value="GO_Central"/>
</dbReference>
<dbReference type="GO" id="GO:0007059">
    <property type="term" value="P:chromosome segregation"/>
    <property type="evidence" value="ECO:0000318"/>
    <property type="project" value="GO_Central"/>
</dbReference>
<dbReference type="GO" id="GO:0006974">
    <property type="term" value="P:DNA damage response"/>
    <property type="evidence" value="ECO:0000270"/>
    <property type="project" value="EcoliWiki"/>
</dbReference>
<dbReference type="GO" id="GO:0015074">
    <property type="term" value="P:DNA integration"/>
    <property type="evidence" value="ECO:0000315"/>
    <property type="project" value="EcoCyc"/>
</dbReference>
<dbReference type="GO" id="GO:0006310">
    <property type="term" value="P:DNA recombination"/>
    <property type="evidence" value="ECO:0000315"/>
    <property type="project" value="EcoCyc"/>
</dbReference>
<dbReference type="GO" id="GO:0071139">
    <property type="term" value="P:resolution of DNA recombination intermediates"/>
    <property type="evidence" value="ECO:0000318"/>
    <property type="project" value="GO_Central"/>
</dbReference>
<dbReference type="FunFam" id="1.10.443.10:FF:000003">
    <property type="entry name" value="Type 1 fimbriae regulatory protein FimE"/>
    <property type="match status" value="1"/>
</dbReference>
<dbReference type="Gene3D" id="1.10.443.10">
    <property type="entry name" value="Intergrase catalytic core"/>
    <property type="match status" value="1"/>
</dbReference>
<dbReference type="InterPro" id="IPR011010">
    <property type="entry name" value="DNA_brk_join_enz"/>
</dbReference>
<dbReference type="InterPro" id="IPR013762">
    <property type="entry name" value="Integrase-like_cat_sf"/>
</dbReference>
<dbReference type="InterPro" id="IPR002104">
    <property type="entry name" value="Integrase_catalytic"/>
</dbReference>
<dbReference type="InterPro" id="IPR050090">
    <property type="entry name" value="Tyrosine_recombinase_XerCD"/>
</dbReference>
<dbReference type="NCBIfam" id="NF007370">
    <property type="entry name" value="PRK09870.1"/>
    <property type="match status" value="1"/>
</dbReference>
<dbReference type="NCBIfam" id="NF007371">
    <property type="entry name" value="PRK09871.1"/>
    <property type="match status" value="1"/>
</dbReference>
<dbReference type="PANTHER" id="PTHR30349">
    <property type="entry name" value="PHAGE INTEGRASE-RELATED"/>
    <property type="match status" value="1"/>
</dbReference>
<dbReference type="PANTHER" id="PTHR30349:SF62">
    <property type="entry name" value="TYPE 1 FIMBRIAE REGULATORY PROTEIN FIMB-RELATED"/>
    <property type="match status" value="1"/>
</dbReference>
<dbReference type="Pfam" id="PF00589">
    <property type="entry name" value="Phage_integrase"/>
    <property type="match status" value="1"/>
</dbReference>
<dbReference type="SUPFAM" id="SSF56349">
    <property type="entry name" value="DNA breaking-rejoining enzymes"/>
    <property type="match status" value="1"/>
</dbReference>
<dbReference type="PROSITE" id="PS51898">
    <property type="entry name" value="TYR_RECOMBINASE"/>
    <property type="match status" value="1"/>
</dbReference>
<accession>P0ADH5</accession>
<accession>P04742</accession>
<accession>Q2M601</accession>
<accession>Q47219</accession>